<name>DEGPL_BRUME</name>
<protein>
    <recommendedName>
        <fullName>Probable periplasmic serine endoprotease DegP-like</fullName>
        <ecNumber>3.4.21.107</ecNumber>
    </recommendedName>
    <alternativeName>
        <fullName>Protease Do</fullName>
    </alternativeName>
</protein>
<accession>Q8YG32</accession>
<reference key="1">
    <citation type="journal article" date="2002" name="Proc. Natl. Acad. Sci. U.S.A.">
        <title>The genome sequence of the facultative intracellular pathogen Brucella melitensis.</title>
        <authorList>
            <person name="DelVecchio V.G."/>
            <person name="Kapatral V."/>
            <person name="Redkar R.J."/>
            <person name="Patra G."/>
            <person name="Mujer C."/>
            <person name="Los T."/>
            <person name="Ivanova N."/>
            <person name="Anderson I."/>
            <person name="Bhattacharyya A."/>
            <person name="Lykidis A."/>
            <person name="Reznik G."/>
            <person name="Jablonski L."/>
            <person name="Larsen N."/>
            <person name="D'Souza M."/>
            <person name="Bernal A."/>
            <person name="Mazur M."/>
            <person name="Goltsman E."/>
            <person name="Selkov E."/>
            <person name="Elzer P.H."/>
            <person name="Hagius S."/>
            <person name="O'Callaghan D."/>
            <person name="Letesson J.-J."/>
            <person name="Haselkorn R."/>
            <person name="Kyrpides N.C."/>
            <person name="Overbeek R."/>
        </authorList>
    </citation>
    <scope>NUCLEOTIDE SEQUENCE [LARGE SCALE GENOMIC DNA]</scope>
    <source>
        <strain>ATCC 23456 / CCUG 17765 / NCTC 10094 / 16M</strain>
    </source>
</reference>
<dbReference type="EC" id="3.4.21.107"/>
<dbReference type="EMBL" id="AE008917">
    <property type="protein sequence ID" value="AAL52511.1"/>
    <property type="molecule type" value="Genomic_DNA"/>
</dbReference>
<dbReference type="PIR" id="AD3418">
    <property type="entry name" value="AD3418"/>
</dbReference>
<dbReference type="RefSeq" id="WP_004683321.1">
    <property type="nucleotide sequence ID" value="NZ_GG703778.1"/>
</dbReference>
<dbReference type="SMR" id="Q8YG32"/>
<dbReference type="GeneID" id="29594176"/>
<dbReference type="KEGG" id="bme:BMEI1330"/>
<dbReference type="KEGG" id="bmel:DK63_73"/>
<dbReference type="PATRIC" id="fig|224914.52.peg.76"/>
<dbReference type="eggNOG" id="COG0265">
    <property type="taxonomic scope" value="Bacteria"/>
</dbReference>
<dbReference type="PhylomeDB" id="Q8YG32"/>
<dbReference type="PRO" id="PR:Q8YG32"/>
<dbReference type="Proteomes" id="UP000000419">
    <property type="component" value="Chromosome I"/>
</dbReference>
<dbReference type="GO" id="GO:0030288">
    <property type="term" value="C:outer membrane-bounded periplasmic space"/>
    <property type="evidence" value="ECO:0000250"/>
    <property type="project" value="UniProtKB"/>
</dbReference>
<dbReference type="GO" id="GO:0004252">
    <property type="term" value="F:serine-type endopeptidase activity"/>
    <property type="evidence" value="ECO:0000250"/>
    <property type="project" value="UniProtKB"/>
</dbReference>
<dbReference type="GO" id="GO:0006508">
    <property type="term" value="P:proteolysis"/>
    <property type="evidence" value="ECO:0007669"/>
    <property type="project" value="UniProtKB-KW"/>
</dbReference>
<dbReference type="CDD" id="cd10839">
    <property type="entry name" value="cpPDZ1_DegP-like"/>
    <property type="match status" value="1"/>
</dbReference>
<dbReference type="CDD" id="cd23084">
    <property type="entry name" value="cpPDZ2_DegP-like"/>
    <property type="match status" value="1"/>
</dbReference>
<dbReference type="FunFam" id="2.30.42.10:FF:000037">
    <property type="entry name" value="Periplasmic serine endoprotease DegP-like"/>
    <property type="match status" value="1"/>
</dbReference>
<dbReference type="FunFam" id="2.30.42.10:FF:000197">
    <property type="entry name" value="Periplasmic serine endoprotease DegP-like"/>
    <property type="match status" value="1"/>
</dbReference>
<dbReference type="FunFam" id="2.40.10.120:FF:000007">
    <property type="entry name" value="Periplasmic serine endoprotease DegP-like"/>
    <property type="match status" value="1"/>
</dbReference>
<dbReference type="Gene3D" id="2.30.42.10">
    <property type="match status" value="2"/>
</dbReference>
<dbReference type="Gene3D" id="2.40.10.120">
    <property type="match status" value="1"/>
</dbReference>
<dbReference type="InterPro" id="IPR001478">
    <property type="entry name" value="PDZ"/>
</dbReference>
<dbReference type="InterPro" id="IPR036034">
    <property type="entry name" value="PDZ_sf"/>
</dbReference>
<dbReference type="InterPro" id="IPR011782">
    <property type="entry name" value="Pept_S1C_Do"/>
</dbReference>
<dbReference type="InterPro" id="IPR009003">
    <property type="entry name" value="Peptidase_S1_PA"/>
</dbReference>
<dbReference type="InterPro" id="IPR001940">
    <property type="entry name" value="Peptidase_S1C"/>
</dbReference>
<dbReference type="NCBIfam" id="TIGR02037">
    <property type="entry name" value="degP_htrA_DO"/>
    <property type="match status" value="1"/>
</dbReference>
<dbReference type="PANTHER" id="PTHR22939">
    <property type="entry name" value="SERINE PROTEASE FAMILY S1C HTRA-RELATED"/>
    <property type="match status" value="1"/>
</dbReference>
<dbReference type="PANTHER" id="PTHR22939:SF129">
    <property type="entry name" value="SERINE PROTEASE HTRA2, MITOCHONDRIAL"/>
    <property type="match status" value="1"/>
</dbReference>
<dbReference type="Pfam" id="PF00595">
    <property type="entry name" value="PDZ"/>
    <property type="match status" value="1"/>
</dbReference>
<dbReference type="Pfam" id="PF13180">
    <property type="entry name" value="PDZ_2"/>
    <property type="match status" value="1"/>
</dbReference>
<dbReference type="Pfam" id="PF13365">
    <property type="entry name" value="Trypsin_2"/>
    <property type="match status" value="1"/>
</dbReference>
<dbReference type="PRINTS" id="PR00834">
    <property type="entry name" value="PROTEASES2C"/>
</dbReference>
<dbReference type="SMART" id="SM00228">
    <property type="entry name" value="PDZ"/>
    <property type="match status" value="2"/>
</dbReference>
<dbReference type="SUPFAM" id="SSF50156">
    <property type="entry name" value="PDZ domain-like"/>
    <property type="match status" value="2"/>
</dbReference>
<dbReference type="SUPFAM" id="SSF50494">
    <property type="entry name" value="Trypsin-like serine proteases"/>
    <property type="match status" value="1"/>
</dbReference>
<dbReference type="PROSITE" id="PS50106">
    <property type="entry name" value="PDZ"/>
    <property type="match status" value="2"/>
</dbReference>
<proteinExistence type="inferred from homology"/>
<organism>
    <name type="scientific">Brucella melitensis biotype 1 (strain ATCC 23456 / CCUG 17765 / NCTC 10094 / 16M)</name>
    <dbReference type="NCBI Taxonomy" id="224914"/>
    <lineage>
        <taxon>Bacteria</taxon>
        <taxon>Pseudomonadati</taxon>
        <taxon>Pseudomonadota</taxon>
        <taxon>Alphaproteobacteria</taxon>
        <taxon>Hyphomicrobiales</taxon>
        <taxon>Brucellaceae</taxon>
        <taxon>Brucella/Ochrobactrum group</taxon>
        <taxon>Brucella</taxon>
    </lineage>
</organism>
<evidence type="ECO:0000250" key="1"/>
<evidence type="ECO:0000255" key="2"/>
<evidence type="ECO:0000255" key="3">
    <source>
        <dbReference type="PROSITE-ProRule" id="PRU00143"/>
    </source>
</evidence>
<evidence type="ECO:0000256" key="4">
    <source>
        <dbReference type="SAM" id="MobiDB-lite"/>
    </source>
</evidence>
<evidence type="ECO:0000305" key="5"/>
<comment type="function">
    <text evidence="1">Might be efficient in the degradation of transiently denatured and unfolded proteins which accumulate in the periplasm following stress conditions.</text>
</comment>
<comment type="catalytic activity">
    <reaction>
        <text>Acts on substrates that are at least partially unfolded. The cleavage site P1 residue is normally between a pair of hydrophobic residues, such as Val-|-Val.</text>
        <dbReference type="EC" id="3.4.21.107"/>
    </reaction>
</comment>
<comment type="subcellular location">
    <subcellularLocation>
        <location evidence="5">Periplasm</location>
    </subcellularLocation>
</comment>
<comment type="similarity">
    <text evidence="5">Belongs to the peptidase S1C family.</text>
</comment>
<sequence>MSRARISNYRKGVAAVALSAALAGAFVVTGPLGALNEARAEAVHVTPPQQAGFADLVEKVRPAVVSVRVKKDVQETSNRGPQFFGPPGFDQLPDGHPLKRFFRDFGMEPRGDSRSDNRRGKANKPRPGHERPVAQGSGFVISEDGYVVTNNHVVSDGDAYTVVLDDGTELDAKLIGADPRTDLAVLKINAPKRKFVYVAFGDDNKVRVGDWVVAVGNPFGLGGTVTSGIVSARGRDIGAGPYDDFIQIDAAVNKGNSGGPAFDLSGEVIGINTAIFSPSGGSVGIAFAIPSSTAKQVVDQLIKKGSVERGWIGVQIQPVTKDIAASLGLAEEKGAIVASPQDDGPAAKAGIKAGDVITAVNGETVQDPRDLARKVANIAPGEKAALTVWRKNKAEEINVTIAAMPNDKGKSGSQSNDNDGGQGETLDSYGLTVVPSEDGKGVVVTDVDPDSDAADRGIRSGDVIVSVNNQTVKTAGDINKAITAAEKSGRKAVLLQLQSNDQSRFVALPINQE</sequence>
<keyword id="KW-0378">Hydrolase</keyword>
<keyword id="KW-0574">Periplasm</keyword>
<keyword id="KW-0645">Protease</keyword>
<keyword id="KW-0677">Repeat</keyword>
<keyword id="KW-0720">Serine protease</keyword>
<keyword id="KW-0732">Signal</keyword>
<keyword id="KW-0346">Stress response</keyword>
<feature type="signal peptide" evidence="2">
    <location>
        <begin position="1"/>
        <end position="25"/>
    </location>
</feature>
<feature type="chain" id="PRO_0000026924" description="Probable periplasmic serine endoprotease DegP-like">
    <location>
        <begin position="26"/>
        <end position="513"/>
    </location>
</feature>
<feature type="domain" description="PDZ 1" evidence="3">
    <location>
        <begin position="300"/>
        <end position="391"/>
    </location>
</feature>
<feature type="domain" description="PDZ 2" evidence="3">
    <location>
        <begin position="414"/>
        <end position="500"/>
    </location>
</feature>
<feature type="region of interest" description="Disordered" evidence="4">
    <location>
        <begin position="100"/>
        <end position="135"/>
    </location>
</feature>
<feature type="region of interest" description="Serine protease">
    <location>
        <begin position="125"/>
        <end position="299"/>
    </location>
</feature>
<feature type="region of interest" description="Disordered" evidence="4">
    <location>
        <begin position="403"/>
        <end position="428"/>
    </location>
</feature>
<feature type="compositionally biased region" description="Basic and acidic residues" evidence="4">
    <location>
        <begin position="101"/>
        <end position="119"/>
    </location>
</feature>
<feature type="active site" description="Charge relay system" evidence="2">
    <location>
        <position position="152"/>
    </location>
</feature>
<feature type="active site" description="Charge relay system" evidence="2">
    <location>
        <position position="182"/>
    </location>
</feature>
<feature type="active site" description="Charge relay system" evidence="2">
    <location>
        <position position="257"/>
    </location>
</feature>
<feature type="binding site" evidence="1">
    <location>
        <begin position="255"/>
        <end position="257"/>
    </location>
    <ligand>
        <name>substrate</name>
    </ligand>
</feature>
<feature type="binding site" evidence="1">
    <location>
        <begin position="312"/>
        <end position="316"/>
    </location>
    <ligand>
        <name>substrate</name>
    </ligand>
</feature>
<gene>
    <name type="primary">htrA</name>
    <name type="ordered locus">BMEI1330</name>
</gene>